<comment type="function">
    <text evidence="2 3">Component of light signal transduction machinery. Involved in repression of photomorphogenesis in darkness by participating in the CDD complex, a complex probably required to regulate the activity of ubiquitin conjugating enzymes (E2s). Repression of photomorphogenesis is probably mediated by ubiquitination and subsequent degradation of photomorphogenesis-promoting factors such as HY5, HYH and LAF1. Although strongly related to ubiquitin-conjugating enzyme, it has no catalytic activity by itself due to the absence of the conserved Cys active site at position 120. It can however enhance the activity of E2 conjugating enzymes.</text>
</comment>
<comment type="subunit">
    <text evidence="2 3 4">Component of the CDD complex, at least composed of COP10, DET1 and DDB1A (PubMed:15342494, PubMed:24563205). Interacts with E3 ubiquitin ligase COP1. Interacts with E2 ubiquitin conjugating UBC5. Interacts with CSN3, CSN4 and CSN8 subunits of the COP9 complex.</text>
</comment>
<comment type="interaction">
    <interactant intactId="EBI-2429853">
        <id>Q9LJD7</id>
    </interactant>
    <interactant intactId="EBI-301649">
        <id>P43254</id>
        <label>COP1</label>
    </interactant>
    <organismsDiffer>false</organismsDiffer>
    <experiments>3</experiments>
</comment>
<comment type="interaction">
    <interactant intactId="EBI-2429853">
        <id>Q9LJD7</id>
    </interactant>
    <interactant intactId="EBI-541750">
        <id>Q8LGH4</id>
        <label>CUL4</label>
    </interactant>
    <organismsDiffer>false</organismsDiffer>
    <experiments>4</experiments>
</comment>
<comment type="interaction">
    <interactant intactId="EBI-2429853">
        <id>Q9LJD7</id>
    </interactant>
    <interactant intactId="EBI-1632780">
        <id>Q9M0V3</id>
        <label>DDB1A</label>
    </interactant>
    <organismsDiffer>false</organismsDiffer>
    <experiments>5</experiments>
</comment>
<comment type="subcellular location">
    <subcellularLocation>
        <location evidence="2">Nucleus</location>
    </subcellularLocation>
</comment>
<comment type="alternative products">
    <event type="alternative splicing"/>
    <isoform>
        <id>Q9LJD7-1</id>
        <name>1</name>
        <sequence type="displayed"/>
    </isoform>
    <text>A number of isoforms are produced. According to EST sequences.</text>
</comment>
<comment type="tissue specificity">
    <text evidence="2">Expressed in flower, leaf, stem and seedling. Expressed at lower level in root.</text>
</comment>
<comment type="similarity">
    <text evidence="1">Belongs to the ubiquitin-conjugating enzyme family.</text>
</comment>
<feature type="chain" id="PRO_0000082611" description="Constitutive photomorphogenesis protein 10">
    <location>
        <begin position="1"/>
        <end position="182"/>
    </location>
</feature>
<feature type="domain" description="UBC core" evidence="1">
    <location>
        <begin position="36"/>
        <end position="182"/>
    </location>
</feature>
<feature type="mutagenesis site" description="In COP10-4; induces an open cotyledon phenotype due to defects in photomorphogenic repression." evidence="2">
    <original>T</original>
    <variation>I</variation>
    <location>
        <position position="78"/>
    </location>
</feature>
<accession>Q9LJD7</accession>
<accession>A0A178VI85</accession>
<accession>Q0WNL1</accession>
<dbReference type="EMBL" id="AY034618">
    <property type="protein sequence ID" value="AAK57749.1"/>
    <property type="molecule type" value="mRNA"/>
</dbReference>
<dbReference type="EMBL" id="AP000603">
    <property type="protein sequence ID" value="BAB01762.1"/>
    <property type="molecule type" value="Genomic_DNA"/>
</dbReference>
<dbReference type="EMBL" id="CP002686">
    <property type="protein sequence ID" value="AEE75370.1"/>
    <property type="molecule type" value="Genomic_DNA"/>
</dbReference>
<dbReference type="EMBL" id="AK229428">
    <property type="protein sequence ID" value="BAF01288.1"/>
    <property type="molecule type" value="mRNA"/>
</dbReference>
<dbReference type="RefSeq" id="NP_566459.2">
    <molecule id="Q9LJD7-1"/>
    <property type="nucleotide sequence ID" value="NM_112201.5"/>
</dbReference>
<dbReference type="SMR" id="Q9LJD7"/>
<dbReference type="BioGRID" id="5891">
    <property type="interactions" value="15"/>
</dbReference>
<dbReference type="FunCoup" id="Q9LJD7">
    <property type="interactions" value="1211"/>
</dbReference>
<dbReference type="IntAct" id="Q9LJD7">
    <property type="interactions" value="8"/>
</dbReference>
<dbReference type="STRING" id="3702.Q9LJD7"/>
<dbReference type="PaxDb" id="3702-AT3G13550.1"/>
<dbReference type="ProteomicsDB" id="242288">
    <molecule id="Q9LJD7-1"/>
</dbReference>
<dbReference type="EnsemblPlants" id="AT3G13550.1">
    <molecule id="Q9LJD7-1"/>
    <property type="protein sequence ID" value="AT3G13550.1"/>
    <property type="gene ID" value="AT3G13550"/>
</dbReference>
<dbReference type="GeneID" id="820557"/>
<dbReference type="Gramene" id="AT3G13550.1">
    <molecule id="Q9LJD7-1"/>
    <property type="protein sequence ID" value="AT3G13550.1"/>
    <property type="gene ID" value="AT3G13550"/>
</dbReference>
<dbReference type="KEGG" id="ath:AT3G13550"/>
<dbReference type="Araport" id="AT3G13550"/>
<dbReference type="TAIR" id="AT3G13550">
    <property type="gene designation" value="FUS9"/>
</dbReference>
<dbReference type="eggNOG" id="KOG0417">
    <property type="taxonomic scope" value="Eukaryota"/>
</dbReference>
<dbReference type="HOGENOM" id="CLU_030988_14_3_1"/>
<dbReference type="InParanoid" id="Q9LJD7"/>
<dbReference type="OMA" id="GDRAKHD"/>
<dbReference type="OrthoDB" id="7851174at2759"/>
<dbReference type="PhylomeDB" id="Q9LJD7"/>
<dbReference type="PRO" id="PR:Q9LJD7"/>
<dbReference type="Proteomes" id="UP000006548">
    <property type="component" value="Chromosome 3"/>
</dbReference>
<dbReference type="ExpressionAtlas" id="Q9LJD7">
    <property type="expression patterns" value="baseline and differential"/>
</dbReference>
<dbReference type="GO" id="GO:0005634">
    <property type="term" value="C:nucleus"/>
    <property type="evidence" value="ECO:0000314"/>
    <property type="project" value="TAIR"/>
</dbReference>
<dbReference type="GO" id="GO:0004842">
    <property type="term" value="F:ubiquitin-protein transferase activity"/>
    <property type="evidence" value="ECO:0000250"/>
    <property type="project" value="TAIR"/>
</dbReference>
<dbReference type="GO" id="GO:0009585">
    <property type="term" value="P:red, far-red light phototransduction"/>
    <property type="evidence" value="ECO:0007669"/>
    <property type="project" value="UniProtKB-KW"/>
</dbReference>
<dbReference type="GO" id="GO:0010099">
    <property type="term" value="P:regulation of photomorphogenesis"/>
    <property type="evidence" value="ECO:0000315"/>
    <property type="project" value="TAIR"/>
</dbReference>
<dbReference type="FunFam" id="3.10.110.10:FF:000092">
    <property type="entry name" value="Constitutive photomorphogenesis protein 10"/>
    <property type="match status" value="1"/>
</dbReference>
<dbReference type="Gene3D" id="3.10.110.10">
    <property type="entry name" value="Ubiquitin Conjugating Enzyme"/>
    <property type="match status" value="1"/>
</dbReference>
<dbReference type="InterPro" id="IPR000608">
    <property type="entry name" value="UBQ-conjugat_E2_core"/>
</dbReference>
<dbReference type="InterPro" id="IPR016135">
    <property type="entry name" value="UBQ-conjugating_enzyme/RWD"/>
</dbReference>
<dbReference type="PANTHER" id="PTHR24068">
    <property type="entry name" value="UBIQUITIN-CONJUGATING ENZYME E2"/>
    <property type="match status" value="1"/>
</dbReference>
<dbReference type="Pfam" id="PF00179">
    <property type="entry name" value="UQ_con"/>
    <property type="match status" value="1"/>
</dbReference>
<dbReference type="SMART" id="SM00212">
    <property type="entry name" value="UBCc"/>
    <property type="match status" value="1"/>
</dbReference>
<dbReference type="SUPFAM" id="SSF54495">
    <property type="entry name" value="UBC-like"/>
    <property type="match status" value="1"/>
</dbReference>
<dbReference type="PROSITE" id="PS50127">
    <property type="entry name" value="UBC_2"/>
    <property type="match status" value="1"/>
</dbReference>
<sequence length="182" mass="20130">MMTPGGSGRLRPLPTAMYAGYSGTASSWVAKTSVSASGKRIQREMAELNIDPPPDCSAGPKGDNLYHWIATIIGPSGTPYEGGIFFLDIIFPSDYPFKPPKLVFKTRIYHCNVDTAGDLSVNILRDSWSPALTITKVLQAIRSIFLKPEPYSPALPVIARLYLTDREKHDEVAKEWTLRFAK</sequence>
<reference key="1">
    <citation type="journal article" date="2002" name="Genes Dev.">
        <title>Arabidopsis COP10 is a ubiquitin-conjugating enzyme variant that acts together with COP1 and the COP9 signalosome in repressing photomorphogenesis.</title>
        <authorList>
            <person name="Suzuki G."/>
            <person name="Yanagawa Y."/>
            <person name="Kwok S.F."/>
            <person name="Matsui M."/>
            <person name="Deng X.-W."/>
        </authorList>
    </citation>
    <scope>NUCLEOTIDE SEQUENCE [MRNA]</scope>
    <scope>FUNCTION</scope>
    <scope>SUBCELLULAR LOCATION</scope>
    <scope>TISSUE SPECIFICITY</scope>
    <scope>INTERACTION WITH CSN3; CSN4 AND CSN8</scope>
    <scope>MUTAGENESIS OF THR-78</scope>
</reference>
<reference key="2">
    <citation type="journal article" date="2000" name="DNA Res.">
        <title>Structural analysis of Arabidopsis thaliana chromosome 3. II. Sequence features of the 4,251,695 bp regions covered by 90 P1, TAC and BAC clones.</title>
        <authorList>
            <person name="Kaneko T."/>
            <person name="Katoh T."/>
            <person name="Sato S."/>
            <person name="Nakamura Y."/>
            <person name="Asamizu E."/>
            <person name="Tabata S."/>
        </authorList>
    </citation>
    <scope>NUCLEOTIDE SEQUENCE [LARGE SCALE GENOMIC DNA]</scope>
    <source>
        <strain>cv. Columbia</strain>
    </source>
</reference>
<reference key="3">
    <citation type="journal article" date="2017" name="Plant J.">
        <title>Araport11: a complete reannotation of the Arabidopsis thaliana reference genome.</title>
        <authorList>
            <person name="Cheng C.Y."/>
            <person name="Krishnakumar V."/>
            <person name="Chan A.P."/>
            <person name="Thibaud-Nissen F."/>
            <person name="Schobel S."/>
            <person name="Town C.D."/>
        </authorList>
    </citation>
    <scope>GENOME REANNOTATION</scope>
    <source>
        <strain>cv. Columbia</strain>
    </source>
</reference>
<reference key="4">
    <citation type="submission" date="2006-07" db="EMBL/GenBank/DDBJ databases">
        <title>Large-scale analysis of RIKEN Arabidopsis full-length (RAFL) cDNAs.</title>
        <authorList>
            <person name="Totoki Y."/>
            <person name="Seki M."/>
            <person name="Ishida J."/>
            <person name="Nakajima M."/>
            <person name="Enju A."/>
            <person name="Kamiya A."/>
            <person name="Narusaka M."/>
            <person name="Shin-i T."/>
            <person name="Nakagawa M."/>
            <person name="Sakamoto N."/>
            <person name="Oishi K."/>
            <person name="Kohara Y."/>
            <person name="Kobayashi M."/>
            <person name="Toyoda A."/>
            <person name="Sakaki Y."/>
            <person name="Sakurai T."/>
            <person name="Iida K."/>
            <person name="Akiyama K."/>
            <person name="Satou M."/>
            <person name="Toyoda T."/>
            <person name="Konagaya A."/>
            <person name="Carninci P."/>
            <person name="Kawai J."/>
            <person name="Hayashizaki Y."/>
            <person name="Shinozaki K."/>
        </authorList>
    </citation>
    <scope>NUCLEOTIDE SEQUENCE [LARGE SCALE MRNA]</scope>
    <source>
        <strain>cv. Columbia</strain>
    </source>
</reference>
<reference key="5">
    <citation type="journal article" date="2004" name="Genes Dev.">
        <title>Arabidopsis COP10 forms a complex with DDB1 and DET1 in vivo and enhances the activity of ubiquitin conjugating enzymes.</title>
        <authorList>
            <person name="Yanagawa Y."/>
            <person name="Sullivan J.A."/>
            <person name="Komatsu S."/>
            <person name="Gusmaroli G."/>
            <person name="Suzuki G."/>
            <person name="Yin J."/>
            <person name="Ishibashi T."/>
            <person name="Saijo Y."/>
            <person name="Rubio V."/>
            <person name="Kimura S."/>
            <person name="Wang J."/>
            <person name="Deng X.-W."/>
        </authorList>
    </citation>
    <scope>FUNCTION</scope>
    <scope>IDENTIFICATION IN CDD COMPLEX WITH DDB1A AND DET1</scope>
    <scope>INTERACTION WITH COP1 AND UBC5</scope>
</reference>
<reference key="6">
    <citation type="journal article" date="2014" name="Plant Cell">
        <title>Targeted degradation of abscisic acid receptors is mediated by the ubiquitin ligase substrate adaptor DDA1 in Arabidopsis.</title>
        <authorList>
            <person name="Irigoyen M.L."/>
            <person name="Iniesto E."/>
            <person name="Rodriguez L."/>
            <person name="Puga M.I."/>
            <person name="Yanagawa Y."/>
            <person name="Pick E."/>
            <person name="Strickland E."/>
            <person name="Paz-Ares J."/>
            <person name="Wei N."/>
            <person name="De Jaeger G."/>
            <person name="Rodriguez P.L."/>
            <person name="Deng X.W."/>
            <person name="Rubio V."/>
        </authorList>
    </citation>
    <scope>IDENTIFICATION IN CDD COMPLEX WITH DET1 AND DDB1A</scope>
</reference>
<protein>
    <recommendedName>
        <fullName>Constitutive photomorphogenesis protein 10</fullName>
    </recommendedName>
</protein>
<keyword id="KW-0025">Alternative splicing</keyword>
<keyword id="KW-0539">Nucleus</keyword>
<keyword id="KW-0607">Phytochrome signaling pathway</keyword>
<keyword id="KW-1185">Reference proteome</keyword>
<keyword id="KW-0833">Ubl conjugation pathway</keyword>
<evidence type="ECO:0000255" key="1">
    <source>
        <dbReference type="PROSITE-ProRule" id="PRU00388"/>
    </source>
</evidence>
<evidence type="ECO:0000269" key="2">
    <source>
    </source>
</evidence>
<evidence type="ECO:0000269" key="3">
    <source>
    </source>
</evidence>
<evidence type="ECO:0000269" key="4">
    <source>
    </source>
</evidence>
<gene>
    <name type="primary">COP10</name>
    <name type="ordered locus">At3g13550</name>
    <name type="ORF">MRP15.21</name>
</gene>
<proteinExistence type="evidence at protein level"/>
<name>COP10_ARATH</name>
<organism>
    <name type="scientific">Arabidopsis thaliana</name>
    <name type="common">Mouse-ear cress</name>
    <dbReference type="NCBI Taxonomy" id="3702"/>
    <lineage>
        <taxon>Eukaryota</taxon>
        <taxon>Viridiplantae</taxon>
        <taxon>Streptophyta</taxon>
        <taxon>Embryophyta</taxon>
        <taxon>Tracheophyta</taxon>
        <taxon>Spermatophyta</taxon>
        <taxon>Magnoliopsida</taxon>
        <taxon>eudicotyledons</taxon>
        <taxon>Gunneridae</taxon>
        <taxon>Pentapetalae</taxon>
        <taxon>rosids</taxon>
        <taxon>malvids</taxon>
        <taxon>Brassicales</taxon>
        <taxon>Brassicaceae</taxon>
        <taxon>Camelineae</taxon>
        <taxon>Arabidopsis</taxon>
    </lineage>
</organism>